<gene>
    <name evidence="1" type="primary">mraZ</name>
    <name type="ordered locus">SE_0853</name>
</gene>
<sequence length="143" mass="17208">MFMGEFDHQLDTKGRMIIPSKFRYDLNERFIITRGLDKCLFGYTLEEWQQIEEKMKTLPMTKKDARKFMRMFFSGAVEVELDKQGRINIPQNLRKYANLSKECTVIGVSNRIEIWDRETWNDFYDESEESFEDIAEDLIDFDF</sequence>
<keyword id="KW-0963">Cytoplasm</keyword>
<keyword id="KW-0238">DNA-binding</keyword>
<keyword id="KW-0677">Repeat</keyword>
<keyword id="KW-0804">Transcription</keyword>
<keyword id="KW-0805">Transcription regulation</keyword>
<accession>Q8CSX8</accession>
<proteinExistence type="inferred from homology"/>
<feature type="chain" id="PRO_0000108545" description="Transcriptional regulator MraZ">
    <location>
        <begin position="1"/>
        <end position="143"/>
    </location>
</feature>
<feature type="domain" description="SpoVT-AbrB 1" evidence="2">
    <location>
        <begin position="5"/>
        <end position="47"/>
    </location>
</feature>
<feature type="domain" description="SpoVT-AbrB 2" evidence="2">
    <location>
        <begin position="76"/>
        <end position="119"/>
    </location>
</feature>
<dbReference type="EMBL" id="AE015929">
    <property type="protein sequence ID" value="AAO04450.1"/>
    <property type="molecule type" value="Genomic_DNA"/>
</dbReference>
<dbReference type="RefSeq" id="NP_764408.1">
    <property type="nucleotide sequence ID" value="NC_004461.1"/>
</dbReference>
<dbReference type="RefSeq" id="WP_001830185.1">
    <property type="nucleotide sequence ID" value="NZ_WBME01000036.1"/>
</dbReference>
<dbReference type="SMR" id="Q8CSX8"/>
<dbReference type="GeneID" id="50019008"/>
<dbReference type="KEGG" id="sep:SE_0853"/>
<dbReference type="PATRIC" id="fig|176280.10.peg.826"/>
<dbReference type="eggNOG" id="COG2001">
    <property type="taxonomic scope" value="Bacteria"/>
</dbReference>
<dbReference type="HOGENOM" id="CLU_107907_0_5_9"/>
<dbReference type="OrthoDB" id="9807753at2"/>
<dbReference type="Proteomes" id="UP000001411">
    <property type="component" value="Chromosome"/>
</dbReference>
<dbReference type="GO" id="GO:0005737">
    <property type="term" value="C:cytoplasm"/>
    <property type="evidence" value="ECO:0007669"/>
    <property type="project" value="UniProtKB-UniRule"/>
</dbReference>
<dbReference type="GO" id="GO:0009295">
    <property type="term" value="C:nucleoid"/>
    <property type="evidence" value="ECO:0007669"/>
    <property type="project" value="UniProtKB-SubCell"/>
</dbReference>
<dbReference type="GO" id="GO:0003700">
    <property type="term" value="F:DNA-binding transcription factor activity"/>
    <property type="evidence" value="ECO:0007669"/>
    <property type="project" value="UniProtKB-UniRule"/>
</dbReference>
<dbReference type="GO" id="GO:0000976">
    <property type="term" value="F:transcription cis-regulatory region binding"/>
    <property type="evidence" value="ECO:0007669"/>
    <property type="project" value="TreeGrafter"/>
</dbReference>
<dbReference type="GO" id="GO:2000143">
    <property type="term" value="P:negative regulation of DNA-templated transcription initiation"/>
    <property type="evidence" value="ECO:0007669"/>
    <property type="project" value="TreeGrafter"/>
</dbReference>
<dbReference type="CDD" id="cd16321">
    <property type="entry name" value="MraZ_C"/>
    <property type="match status" value="1"/>
</dbReference>
<dbReference type="CDD" id="cd16320">
    <property type="entry name" value="MraZ_N"/>
    <property type="match status" value="1"/>
</dbReference>
<dbReference type="FunFam" id="3.40.1550.20:FF:000002">
    <property type="entry name" value="Transcriptional regulator MraZ"/>
    <property type="match status" value="1"/>
</dbReference>
<dbReference type="Gene3D" id="3.40.1550.20">
    <property type="entry name" value="Transcriptional regulator MraZ domain"/>
    <property type="match status" value="1"/>
</dbReference>
<dbReference type="HAMAP" id="MF_01008">
    <property type="entry name" value="MraZ"/>
    <property type="match status" value="1"/>
</dbReference>
<dbReference type="InterPro" id="IPR003444">
    <property type="entry name" value="MraZ"/>
</dbReference>
<dbReference type="InterPro" id="IPR035644">
    <property type="entry name" value="MraZ_C"/>
</dbReference>
<dbReference type="InterPro" id="IPR020603">
    <property type="entry name" value="MraZ_dom"/>
</dbReference>
<dbReference type="InterPro" id="IPR035642">
    <property type="entry name" value="MraZ_N"/>
</dbReference>
<dbReference type="InterPro" id="IPR038619">
    <property type="entry name" value="MraZ_sf"/>
</dbReference>
<dbReference type="InterPro" id="IPR007159">
    <property type="entry name" value="SpoVT-AbrB_dom"/>
</dbReference>
<dbReference type="InterPro" id="IPR037914">
    <property type="entry name" value="SpoVT-AbrB_sf"/>
</dbReference>
<dbReference type="NCBIfam" id="TIGR00242">
    <property type="entry name" value="division/cell wall cluster transcriptional repressor MraZ"/>
    <property type="match status" value="1"/>
</dbReference>
<dbReference type="PANTHER" id="PTHR34701">
    <property type="entry name" value="TRANSCRIPTIONAL REGULATOR MRAZ"/>
    <property type="match status" value="1"/>
</dbReference>
<dbReference type="PANTHER" id="PTHR34701:SF1">
    <property type="entry name" value="TRANSCRIPTIONAL REGULATOR MRAZ"/>
    <property type="match status" value="1"/>
</dbReference>
<dbReference type="Pfam" id="PF02381">
    <property type="entry name" value="MraZ"/>
    <property type="match status" value="2"/>
</dbReference>
<dbReference type="SUPFAM" id="SSF89447">
    <property type="entry name" value="AbrB/MazE/MraZ-like"/>
    <property type="match status" value="1"/>
</dbReference>
<dbReference type="PROSITE" id="PS51740">
    <property type="entry name" value="SPOVT_ABRB"/>
    <property type="match status" value="2"/>
</dbReference>
<reference key="1">
    <citation type="journal article" date="2003" name="Mol. Microbiol.">
        <title>Genome-based analysis of virulence genes in a non-biofilm-forming Staphylococcus epidermidis strain (ATCC 12228).</title>
        <authorList>
            <person name="Zhang Y.-Q."/>
            <person name="Ren S.-X."/>
            <person name="Li H.-L."/>
            <person name="Wang Y.-X."/>
            <person name="Fu G."/>
            <person name="Yang J."/>
            <person name="Qin Z.-Q."/>
            <person name="Miao Y.-G."/>
            <person name="Wang W.-Y."/>
            <person name="Chen R.-S."/>
            <person name="Shen Y."/>
            <person name="Chen Z."/>
            <person name="Yuan Z.-H."/>
            <person name="Zhao G.-P."/>
            <person name="Qu D."/>
            <person name="Danchin A."/>
            <person name="Wen Y.-M."/>
        </authorList>
    </citation>
    <scope>NUCLEOTIDE SEQUENCE [LARGE SCALE GENOMIC DNA]</scope>
    <source>
        <strain>ATCC 12228 / FDA PCI 1200</strain>
    </source>
</reference>
<protein>
    <recommendedName>
        <fullName>Transcriptional regulator MraZ</fullName>
    </recommendedName>
</protein>
<evidence type="ECO:0000255" key="1">
    <source>
        <dbReference type="HAMAP-Rule" id="MF_01008"/>
    </source>
</evidence>
<evidence type="ECO:0000255" key="2">
    <source>
        <dbReference type="PROSITE-ProRule" id="PRU01076"/>
    </source>
</evidence>
<comment type="subunit">
    <text evidence="1">Forms oligomers.</text>
</comment>
<comment type="subcellular location">
    <subcellularLocation>
        <location evidence="1">Cytoplasm</location>
        <location evidence="1">Nucleoid</location>
    </subcellularLocation>
</comment>
<comment type="similarity">
    <text evidence="1">Belongs to the MraZ family.</text>
</comment>
<organism>
    <name type="scientific">Staphylococcus epidermidis (strain ATCC 12228 / FDA PCI 1200)</name>
    <dbReference type="NCBI Taxonomy" id="176280"/>
    <lineage>
        <taxon>Bacteria</taxon>
        <taxon>Bacillati</taxon>
        <taxon>Bacillota</taxon>
        <taxon>Bacilli</taxon>
        <taxon>Bacillales</taxon>
        <taxon>Staphylococcaceae</taxon>
        <taxon>Staphylococcus</taxon>
    </lineage>
</organism>
<name>MRAZ_STAES</name>